<protein>
    <recommendedName>
        <fullName evidence="6">Peroxisome assembly protein 10</fullName>
        <ecNumber evidence="1">2.3.2.27</ecNumber>
    </recommendedName>
    <alternativeName>
        <fullName evidence="6">Peroxin-10</fullName>
    </alternativeName>
</protein>
<accession>G2Q0E2</accession>
<keyword id="KW-0002">3D-structure</keyword>
<keyword id="KW-0472">Membrane</keyword>
<keyword id="KW-0479">Metal-binding</keyword>
<keyword id="KW-0576">Peroxisome</keyword>
<keyword id="KW-0962">Peroxisome biogenesis</keyword>
<keyword id="KW-0653">Protein transport</keyword>
<keyword id="KW-1185">Reference proteome</keyword>
<keyword id="KW-0808">Transferase</keyword>
<keyword id="KW-0812">Transmembrane</keyword>
<keyword id="KW-1133">Transmembrane helix</keyword>
<keyword id="KW-0813">Transport</keyword>
<keyword id="KW-0833">Ubl conjugation pathway</keyword>
<keyword id="KW-0862">Zinc</keyword>
<keyword id="KW-0863">Zinc-finger</keyword>
<gene>
    <name evidence="5" type="primary">PEX10</name>
    <name evidence="8" type="ORF">MYCTH_2294231</name>
</gene>
<dbReference type="EC" id="2.3.2.27" evidence="1"/>
<dbReference type="EMBL" id="CP003002">
    <property type="protein sequence ID" value="AEO53205.1"/>
    <property type="molecule type" value="Genomic_DNA"/>
</dbReference>
<dbReference type="RefSeq" id="XP_003658450.1">
    <property type="nucleotide sequence ID" value="XM_003658402.1"/>
</dbReference>
<dbReference type="PDB" id="7T92">
    <property type="method" value="EM"/>
    <property type="resolution" value="3.10 A"/>
    <property type="chains" value="C=1-454"/>
</dbReference>
<dbReference type="PDBsum" id="7T92"/>
<dbReference type="EMDB" id="EMD-25750"/>
<dbReference type="SMR" id="G2Q0E2"/>
<dbReference type="FunCoup" id="G2Q0E2">
    <property type="interactions" value="269"/>
</dbReference>
<dbReference type="STRING" id="573729.G2Q0E2"/>
<dbReference type="GeneID" id="11505642"/>
<dbReference type="KEGG" id="mtm:MYCTH_2294231"/>
<dbReference type="VEuPathDB" id="FungiDB:MYCTH_2294231"/>
<dbReference type="eggNOG" id="KOG0317">
    <property type="taxonomic scope" value="Eukaryota"/>
</dbReference>
<dbReference type="HOGENOM" id="CLU_041707_2_0_1"/>
<dbReference type="InParanoid" id="G2Q0E2"/>
<dbReference type="OMA" id="YCDVVQL"/>
<dbReference type="OrthoDB" id="6270329at2759"/>
<dbReference type="UniPathway" id="UPA00143"/>
<dbReference type="Proteomes" id="UP000007322">
    <property type="component" value="Chromosome 1"/>
</dbReference>
<dbReference type="GO" id="GO:0005778">
    <property type="term" value="C:peroxisomal membrane"/>
    <property type="evidence" value="ECO:0007669"/>
    <property type="project" value="UniProtKB-SubCell"/>
</dbReference>
<dbReference type="GO" id="GO:0016740">
    <property type="term" value="F:transferase activity"/>
    <property type="evidence" value="ECO:0007669"/>
    <property type="project" value="UniProtKB-KW"/>
</dbReference>
<dbReference type="GO" id="GO:0008270">
    <property type="term" value="F:zinc ion binding"/>
    <property type="evidence" value="ECO:0007669"/>
    <property type="project" value="UniProtKB-KW"/>
</dbReference>
<dbReference type="GO" id="GO:0016562">
    <property type="term" value="P:protein import into peroxisome matrix, receptor recycling"/>
    <property type="evidence" value="ECO:0007669"/>
    <property type="project" value="UniProtKB-ARBA"/>
</dbReference>
<dbReference type="GO" id="GO:0016567">
    <property type="term" value="P:protein ubiquitination"/>
    <property type="evidence" value="ECO:0007669"/>
    <property type="project" value="UniProtKB-UniPathway"/>
</dbReference>
<dbReference type="CDD" id="cd16527">
    <property type="entry name" value="RING-HC_PEX10"/>
    <property type="match status" value="1"/>
</dbReference>
<dbReference type="FunFam" id="3.30.40.10:FF:000395">
    <property type="entry name" value="Putative Peroxisome biosynthesis protein (Peroxin-10)"/>
    <property type="match status" value="1"/>
</dbReference>
<dbReference type="Gene3D" id="3.30.40.10">
    <property type="entry name" value="Zinc/RING finger domain, C3HC4 (zinc finger)"/>
    <property type="match status" value="1"/>
</dbReference>
<dbReference type="InterPro" id="IPR025654">
    <property type="entry name" value="PEX2/10"/>
</dbReference>
<dbReference type="InterPro" id="IPR006845">
    <property type="entry name" value="Pex_N"/>
</dbReference>
<dbReference type="InterPro" id="IPR001841">
    <property type="entry name" value="Znf_RING"/>
</dbReference>
<dbReference type="InterPro" id="IPR013083">
    <property type="entry name" value="Znf_RING/FYVE/PHD"/>
</dbReference>
<dbReference type="InterPro" id="IPR017907">
    <property type="entry name" value="Znf_RING_CS"/>
</dbReference>
<dbReference type="PANTHER" id="PTHR23350">
    <property type="entry name" value="PEROXISOME ASSEMBLY PROTEIN 10"/>
    <property type="match status" value="1"/>
</dbReference>
<dbReference type="PANTHER" id="PTHR23350:SF0">
    <property type="entry name" value="PEROXISOME BIOGENESIS FACTOR 10"/>
    <property type="match status" value="1"/>
</dbReference>
<dbReference type="Pfam" id="PF04757">
    <property type="entry name" value="Pex2_Pex12"/>
    <property type="match status" value="1"/>
</dbReference>
<dbReference type="Pfam" id="PF13923">
    <property type="entry name" value="zf-C3HC4_2"/>
    <property type="match status" value="1"/>
</dbReference>
<dbReference type="SMART" id="SM00184">
    <property type="entry name" value="RING"/>
    <property type="match status" value="1"/>
</dbReference>
<dbReference type="SUPFAM" id="SSF57850">
    <property type="entry name" value="RING/U-box"/>
    <property type="match status" value="1"/>
</dbReference>
<dbReference type="PROSITE" id="PS00518">
    <property type="entry name" value="ZF_RING_1"/>
    <property type="match status" value="1"/>
</dbReference>
<dbReference type="PROSITE" id="PS50089">
    <property type="entry name" value="ZF_RING_2"/>
    <property type="match status" value="1"/>
</dbReference>
<sequence length="454" mass="48882">MATQPPPARPPPPLTSSPYPYAAAPDIIRAHQKDAYFQGVLANRLSDLHRRLRGARSAHAWAAETRTFAAALYLCLTTLLGNRTLGEEYCDLVQVEEAPSKLFASSSSKAADDHIYENGLGGGGDGGPLLPSLPRRAGYILTAIVLPHLASRALPSVRSAIRKRLQSRLATLSRRRQQTGTKSGSGRGGRGGGGGITEYRVLRYLLTHLTPLTSGAHFRAATLAVFYFTGAYYELSKWVWGLRYVFTTRAGRVVDDDHNRHHHSPQHGGGNGGRAGYEVLGVLLVVQMAVRAWLHVREQLSSGSVAGGGGEEEEDGEDGFRERTAFGPGTNVDVSLDEHAFTSNNELLGGGGGGGGSSSQRSLGEIGAMAHTPVLKAGRARYDLGTSDKVMGWIKGAQQRKCTLCLEELKDPAATQCGHVFCWACIGDWVREKPECPLCRREAMVQHILPLRAA</sequence>
<name>PEX10_THET4</name>
<comment type="function">
    <text evidence="1">E3 ubiquitin-protein ligase component of a retrotranslocation channel required for peroxisome organization by mediating export of the PEX5 receptor from peroxisomes to the cytosol, thereby promoting PEX5 recycling (By similarity). The retrotranslocation channel is composed of PEX2, PEX10 and PEX12; each subunit contributing transmembrane segments that coassemble into an open channel that specifically allows the passage of PEX5 through the peroxisomal membrane (By similarity). PEX10 also regulates PEX5 recycling by acting as a E3 ubiquitin-protein ligase (By similarity). When PEX5 recycling is compromised, PEX10 catalyzes polyubiquitination of PEX5 during its passage through the retrotranslocation channel, leading to its degradation (By similarity).</text>
</comment>
<comment type="catalytic activity">
    <reaction evidence="1">
        <text>S-ubiquitinyl-[E2 ubiquitin-conjugating enzyme]-L-cysteine + [acceptor protein]-L-lysine = [E2 ubiquitin-conjugating enzyme]-L-cysteine + N(6)-ubiquitinyl-[acceptor protein]-L-lysine.</text>
        <dbReference type="EC" id="2.3.2.27"/>
    </reaction>
</comment>
<comment type="activity regulation">
    <text evidence="1">The E3 ubiquitin-protein ligase activity is stimulated by PEX12.</text>
</comment>
<comment type="pathway">
    <text evidence="1">Protein modification; protein ubiquitination.</text>
</comment>
<comment type="subunit">
    <text evidence="4">Component of the PEX2-PEX10-PEX12 retrotranslocation channel, composed of PEX2, PEX10 and PEX12.</text>
</comment>
<comment type="subcellular location">
    <subcellularLocation>
        <location evidence="1">Peroxisome membrane</location>
        <topology evidence="4">Multi-pass membrane protein</topology>
    </subcellularLocation>
</comment>
<comment type="domain">
    <text evidence="4">The three subunits of the retrotranslocation channel (PEX2, PEX10 and PEX12) coassemble in the membrane into a channel with an open 10 Angstrom pore (PubMed:35768507). The RING-type zinc-fingers that catalyze PEX5 receptor ubiquitination are positioned above the pore on the cytosolic side of the complex (PubMed:35768507).</text>
</comment>
<comment type="similarity">
    <text evidence="6">Belongs to the pex2/pex10/pex12 family.</text>
</comment>
<organism>
    <name type="scientific">Thermothelomyces thermophilus (strain ATCC 42464 / BCRC 31852 / DSM 1799)</name>
    <name type="common">Sporotrichum thermophile</name>
    <dbReference type="NCBI Taxonomy" id="573729"/>
    <lineage>
        <taxon>Eukaryota</taxon>
        <taxon>Fungi</taxon>
        <taxon>Dikarya</taxon>
        <taxon>Ascomycota</taxon>
        <taxon>Pezizomycotina</taxon>
        <taxon>Sordariomycetes</taxon>
        <taxon>Sordariomycetidae</taxon>
        <taxon>Sordariales</taxon>
        <taxon>Chaetomiaceae</taxon>
        <taxon>Thermothelomyces</taxon>
    </lineage>
</organism>
<reference key="1">
    <citation type="journal article" date="2011" name="Nat. Biotechnol.">
        <title>Comparative genomic analysis of the thermophilic biomass-degrading fungi Myceliophthora thermophila and Thielavia terrestris.</title>
        <authorList>
            <person name="Berka R.M."/>
            <person name="Grigoriev I.V."/>
            <person name="Otillar R."/>
            <person name="Salamov A."/>
            <person name="Grimwood J."/>
            <person name="Reid I."/>
            <person name="Ishmael N."/>
            <person name="John T."/>
            <person name="Darmond C."/>
            <person name="Moisan M.-C."/>
            <person name="Henrissat B."/>
            <person name="Coutinho P.M."/>
            <person name="Lombard V."/>
            <person name="Natvig D.O."/>
            <person name="Lindquist E."/>
            <person name="Schmutz J."/>
            <person name="Lucas S."/>
            <person name="Harris P."/>
            <person name="Powlowski J."/>
            <person name="Bellemare A."/>
            <person name="Taylor D."/>
            <person name="Butler G."/>
            <person name="de Vries R.P."/>
            <person name="Allijn I.E."/>
            <person name="van den Brink J."/>
            <person name="Ushinsky S."/>
            <person name="Storms R."/>
            <person name="Powell A.J."/>
            <person name="Paulsen I.T."/>
            <person name="Elbourne L.D.H."/>
            <person name="Baker S.E."/>
            <person name="Magnuson J."/>
            <person name="LaBoissiere S."/>
            <person name="Clutterbuck A.J."/>
            <person name="Martinez D."/>
            <person name="Wogulis M."/>
            <person name="de Leon A.L."/>
            <person name="Rey M.W."/>
            <person name="Tsang A."/>
        </authorList>
    </citation>
    <scope>NUCLEOTIDE SEQUENCE [LARGE SCALE GENOMIC DNA]</scope>
    <source>
        <strain>ATCC 42464 / BCRC 31852 / DSM 1799</strain>
    </source>
</reference>
<reference key="2">
    <citation type="journal article" date="2022" name="Nature">
        <title>A peroxisomal ubiquitin ligase complex forms a retrotranslocation channel.</title>
        <authorList>
            <person name="Feng P."/>
            <person name="Wu X."/>
            <person name="Erramilli S.K."/>
            <person name="Paulo J.A."/>
            <person name="Knejski P."/>
            <person name="Gygi S.P."/>
            <person name="Kossiakoff A.A."/>
            <person name="Rapoport T.A."/>
        </authorList>
    </citation>
    <scope>STRUCTURE BY ELECTRON MICROSCOPY (3.1 ANGSTROMS) IN COMPLEX WITH ZINC; PEX2 AND PEX10</scope>
    <scope>TOPOLOGY</scope>
    <scope>IDENTIFICATION IN THE PEX2-PEX10-PEX12 RETROTRANSLOCATION CHANNEL</scope>
    <scope>DOMAIN</scope>
</reference>
<evidence type="ECO:0000250" key="1">
    <source>
        <dbReference type="UniProtKB" id="Q05568"/>
    </source>
</evidence>
<evidence type="ECO:0000255" key="2">
    <source>
        <dbReference type="PROSITE-ProRule" id="PRU00175"/>
    </source>
</evidence>
<evidence type="ECO:0000256" key="3">
    <source>
        <dbReference type="SAM" id="MobiDB-lite"/>
    </source>
</evidence>
<evidence type="ECO:0000269" key="4">
    <source>
    </source>
</evidence>
<evidence type="ECO:0000303" key="5">
    <source>
    </source>
</evidence>
<evidence type="ECO:0000305" key="6"/>
<evidence type="ECO:0000305" key="7">
    <source>
    </source>
</evidence>
<evidence type="ECO:0000312" key="8">
    <source>
        <dbReference type="EMBL" id="AEO53205.1"/>
    </source>
</evidence>
<evidence type="ECO:0007744" key="9">
    <source>
        <dbReference type="PDB" id="7T92"/>
    </source>
</evidence>
<evidence type="ECO:0007829" key="10">
    <source>
        <dbReference type="PDB" id="7T92"/>
    </source>
</evidence>
<proteinExistence type="evidence at protein level"/>
<feature type="chain" id="PRO_0000456988" description="Peroxisome assembly protein 10">
    <location>
        <begin position="1"/>
        <end position="454"/>
    </location>
</feature>
<feature type="topological domain" description="Peroxisomal matrix" evidence="7">
    <location>
        <begin position="1"/>
        <end position="23"/>
    </location>
</feature>
<feature type="transmembrane region" description="Helical; Name=TM1" evidence="4 9">
    <location>
        <begin position="24"/>
        <end position="53"/>
    </location>
</feature>
<feature type="topological domain" description="Cytoplasmic" evidence="7">
    <location>
        <position position="54"/>
    </location>
</feature>
<feature type="transmembrane region" description="Helical; Name=TM2" evidence="4 9">
    <location>
        <begin position="55"/>
        <end position="76"/>
    </location>
</feature>
<feature type="topological domain" description="Peroxisomal matrix" evidence="7">
    <location>
        <begin position="77"/>
        <end position="132"/>
    </location>
</feature>
<feature type="transmembrane region" description="Helical; Name=TM3" evidence="4 9">
    <location>
        <begin position="133"/>
        <end position="165"/>
    </location>
</feature>
<feature type="topological domain" description="Cytoplasmic" evidence="7">
    <location>
        <begin position="166"/>
        <end position="201"/>
    </location>
</feature>
<feature type="transmembrane region" description="Helical; Name=TM4" evidence="4 9">
    <location>
        <begin position="202"/>
        <end position="229"/>
    </location>
</feature>
<feature type="topological domain" description="Peroxisomal matrix" evidence="7">
    <location>
        <begin position="230"/>
        <end position="276"/>
    </location>
</feature>
<feature type="transmembrane region" description="Helical; Name=TM5" evidence="4 9">
    <location>
        <begin position="277"/>
        <end position="296"/>
    </location>
</feature>
<feature type="topological domain" description="Cytoplasmic" evidence="7">
    <location>
        <begin position="297"/>
        <end position="454"/>
    </location>
</feature>
<feature type="zinc finger region" description="RING-type" evidence="2">
    <location>
        <begin position="402"/>
        <end position="440"/>
    </location>
</feature>
<feature type="region of interest" description="Disordered" evidence="3">
    <location>
        <begin position="171"/>
        <end position="194"/>
    </location>
</feature>
<feature type="region of interest" description="Disordered" evidence="3">
    <location>
        <begin position="302"/>
        <end position="329"/>
    </location>
</feature>
<feature type="compositionally biased region" description="Gly residues" evidence="3">
    <location>
        <begin position="183"/>
        <end position="194"/>
    </location>
</feature>
<feature type="binding site" evidence="4 9">
    <location>
        <position position="402"/>
    </location>
    <ligand>
        <name>Zn(2+)</name>
        <dbReference type="ChEBI" id="CHEBI:29105"/>
        <label>1</label>
    </ligand>
</feature>
<feature type="binding site" evidence="4 9">
    <location>
        <position position="405"/>
    </location>
    <ligand>
        <name>Zn(2+)</name>
        <dbReference type="ChEBI" id="CHEBI:29105"/>
        <label>1</label>
    </ligand>
</feature>
<feature type="binding site" evidence="4 9">
    <location>
        <position position="417"/>
    </location>
    <ligand>
        <name>Zn(2+)</name>
        <dbReference type="ChEBI" id="CHEBI:29105"/>
        <label>2</label>
    </ligand>
</feature>
<feature type="binding site" evidence="4 9">
    <location>
        <position position="419"/>
    </location>
    <ligand>
        <name>Zn(2+)</name>
        <dbReference type="ChEBI" id="CHEBI:29105"/>
        <label>2</label>
    </ligand>
</feature>
<feature type="binding site" evidence="4 9">
    <location>
        <position position="422"/>
    </location>
    <ligand>
        <name>Zn(2+)</name>
        <dbReference type="ChEBI" id="CHEBI:29105"/>
        <label>1</label>
    </ligand>
</feature>
<feature type="binding site" evidence="4 9">
    <location>
        <position position="425"/>
    </location>
    <ligand>
        <name>Zn(2+)</name>
        <dbReference type="ChEBI" id="CHEBI:29105"/>
        <label>1</label>
    </ligand>
</feature>
<feature type="binding site" evidence="4 9">
    <location>
        <position position="436"/>
    </location>
    <ligand>
        <name>Zn(2+)</name>
        <dbReference type="ChEBI" id="CHEBI:29105"/>
        <label>2</label>
    </ligand>
</feature>
<feature type="binding site" evidence="4 9">
    <location>
        <position position="439"/>
    </location>
    <ligand>
        <name>Zn(2+)</name>
        <dbReference type="ChEBI" id="CHEBI:29105"/>
        <label>2</label>
    </ligand>
</feature>
<feature type="helix" evidence="10">
    <location>
        <begin position="24"/>
        <end position="52"/>
    </location>
</feature>
<feature type="helix" evidence="10">
    <location>
        <begin position="55"/>
        <end position="60"/>
    </location>
</feature>
<feature type="helix" evidence="10">
    <location>
        <begin position="62"/>
        <end position="76"/>
    </location>
</feature>
<feature type="turn" evidence="10">
    <location>
        <begin position="77"/>
        <end position="81"/>
    </location>
</feature>
<feature type="helix" evidence="10">
    <location>
        <begin position="85"/>
        <end position="90"/>
    </location>
</feature>
<feature type="strand" evidence="10">
    <location>
        <begin position="92"/>
        <end position="96"/>
    </location>
</feature>
<feature type="helix" evidence="10">
    <location>
        <begin position="133"/>
        <end position="143"/>
    </location>
</feature>
<feature type="helix" evidence="10">
    <location>
        <begin position="145"/>
        <end position="166"/>
    </location>
</feature>
<feature type="helix" evidence="10">
    <location>
        <begin position="202"/>
        <end position="207"/>
    </location>
</feature>
<feature type="helix" evidence="10">
    <location>
        <begin position="209"/>
        <end position="213"/>
    </location>
</feature>
<feature type="helix" evidence="10">
    <location>
        <begin position="216"/>
        <end position="229"/>
    </location>
</feature>
<feature type="helix" evidence="10">
    <location>
        <begin position="235"/>
        <end position="239"/>
    </location>
</feature>
<feature type="strand" evidence="10">
    <location>
        <begin position="242"/>
        <end position="246"/>
    </location>
</feature>
<feature type="helix" evidence="10">
    <location>
        <begin position="279"/>
        <end position="297"/>
    </location>
</feature>
<feature type="strand" evidence="10">
    <location>
        <begin position="342"/>
        <end position="345"/>
    </location>
</feature>
<feature type="turn" evidence="10">
    <location>
        <begin position="362"/>
        <end position="364"/>
    </location>
</feature>
<feature type="helix" evidence="10">
    <location>
        <begin position="365"/>
        <end position="370"/>
    </location>
</feature>
<feature type="strand" evidence="10">
    <location>
        <begin position="381"/>
        <end position="383"/>
    </location>
</feature>
<feature type="turn" evidence="10">
    <location>
        <begin position="397"/>
        <end position="400"/>
    </location>
</feature>
<feature type="turn" evidence="10">
    <location>
        <begin position="403"/>
        <end position="405"/>
    </location>
</feature>
<feature type="strand" evidence="10">
    <location>
        <begin position="410"/>
        <end position="414"/>
    </location>
</feature>
<feature type="strand" evidence="10">
    <location>
        <begin position="420"/>
        <end position="422"/>
    </location>
</feature>
<feature type="helix" evidence="10">
    <location>
        <begin position="423"/>
        <end position="432"/>
    </location>
</feature>
<feature type="strand" evidence="10">
    <location>
        <begin position="433"/>
        <end position="435"/>
    </location>
</feature>
<feature type="turn" evidence="10">
    <location>
        <begin position="437"/>
        <end position="439"/>
    </location>
</feature>
<feature type="helix" evidence="10">
    <location>
        <begin position="445"/>
        <end position="447"/>
    </location>
</feature>